<accession>A8FHS6</accession>
<gene>
    <name evidence="1" type="primary">nagB</name>
    <name type="ordered locus">BPUM_3139</name>
</gene>
<keyword id="KW-0119">Carbohydrate metabolism</keyword>
<keyword id="KW-0378">Hydrolase</keyword>
<dbReference type="EC" id="3.5.99.6" evidence="1"/>
<dbReference type="EMBL" id="CP000813">
    <property type="protein sequence ID" value="ABV63793.1"/>
    <property type="molecule type" value="Genomic_DNA"/>
</dbReference>
<dbReference type="RefSeq" id="WP_012011381.1">
    <property type="nucleotide sequence ID" value="NZ_VEIC01000001.1"/>
</dbReference>
<dbReference type="SMR" id="A8FHS6"/>
<dbReference type="STRING" id="315750.BPUM_3139"/>
<dbReference type="GeneID" id="5622430"/>
<dbReference type="KEGG" id="bpu:BPUM_3139"/>
<dbReference type="eggNOG" id="COG0363">
    <property type="taxonomic scope" value="Bacteria"/>
</dbReference>
<dbReference type="HOGENOM" id="CLU_049611_1_1_9"/>
<dbReference type="OrthoDB" id="9791139at2"/>
<dbReference type="UniPathway" id="UPA00629">
    <property type="reaction ID" value="UER00684"/>
</dbReference>
<dbReference type="Proteomes" id="UP000001355">
    <property type="component" value="Chromosome"/>
</dbReference>
<dbReference type="GO" id="GO:0005737">
    <property type="term" value="C:cytoplasm"/>
    <property type="evidence" value="ECO:0007669"/>
    <property type="project" value="TreeGrafter"/>
</dbReference>
<dbReference type="GO" id="GO:0004342">
    <property type="term" value="F:glucosamine-6-phosphate deaminase activity"/>
    <property type="evidence" value="ECO:0007669"/>
    <property type="project" value="UniProtKB-UniRule"/>
</dbReference>
<dbReference type="GO" id="GO:0042802">
    <property type="term" value="F:identical protein binding"/>
    <property type="evidence" value="ECO:0007669"/>
    <property type="project" value="TreeGrafter"/>
</dbReference>
<dbReference type="GO" id="GO:0005975">
    <property type="term" value="P:carbohydrate metabolic process"/>
    <property type="evidence" value="ECO:0007669"/>
    <property type="project" value="InterPro"/>
</dbReference>
<dbReference type="GO" id="GO:0006043">
    <property type="term" value="P:glucosamine catabolic process"/>
    <property type="evidence" value="ECO:0007669"/>
    <property type="project" value="TreeGrafter"/>
</dbReference>
<dbReference type="GO" id="GO:0006046">
    <property type="term" value="P:N-acetylglucosamine catabolic process"/>
    <property type="evidence" value="ECO:0007669"/>
    <property type="project" value="TreeGrafter"/>
</dbReference>
<dbReference type="GO" id="GO:0019262">
    <property type="term" value="P:N-acetylneuraminate catabolic process"/>
    <property type="evidence" value="ECO:0007669"/>
    <property type="project" value="UniProtKB-UniRule"/>
</dbReference>
<dbReference type="CDD" id="cd01399">
    <property type="entry name" value="GlcN6P_deaminase"/>
    <property type="match status" value="1"/>
</dbReference>
<dbReference type="FunFam" id="3.40.50.1360:FF:000003">
    <property type="entry name" value="Glucosamine-6-phosphate deaminase"/>
    <property type="match status" value="1"/>
</dbReference>
<dbReference type="Gene3D" id="3.40.50.1360">
    <property type="match status" value="1"/>
</dbReference>
<dbReference type="HAMAP" id="MF_01241">
    <property type="entry name" value="GlcN6P_deamin"/>
    <property type="match status" value="1"/>
</dbReference>
<dbReference type="InterPro" id="IPR006148">
    <property type="entry name" value="Glc/Gal-6P_isomerase"/>
</dbReference>
<dbReference type="InterPro" id="IPR004547">
    <property type="entry name" value="Glucosamine6P_isomerase"/>
</dbReference>
<dbReference type="InterPro" id="IPR018321">
    <property type="entry name" value="Glucosamine6P_isomerase_CS"/>
</dbReference>
<dbReference type="InterPro" id="IPR037171">
    <property type="entry name" value="NagB/RpiA_transferase-like"/>
</dbReference>
<dbReference type="NCBIfam" id="TIGR00502">
    <property type="entry name" value="nagB"/>
    <property type="match status" value="1"/>
</dbReference>
<dbReference type="PANTHER" id="PTHR11280">
    <property type="entry name" value="GLUCOSAMINE-6-PHOSPHATE ISOMERASE"/>
    <property type="match status" value="1"/>
</dbReference>
<dbReference type="PANTHER" id="PTHR11280:SF5">
    <property type="entry name" value="GLUCOSAMINE-6-PHOSPHATE ISOMERASE"/>
    <property type="match status" value="1"/>
</dbReference>
<dbReference type="Pfam" id="PF01182">
    <property type="entry name" value="Glucosamine_iso"/>
    <property type="match status" value="1"/>
</dbReference>
<dbReference type="SUPFAM" id="SSF100950">
    <property type="entry name" value="NagB/RpiA/CoA transferase-like"/>
    <property type="match status" value="1"/>
</dbReference>
<dbReference type="PROSITE" id="PS01161">
    <property type="entry name" value="GLC_GALNAC_ISOMERASE"/>
    <property type="match status" value="1"/>
</dbReference>
<organism>
    <name type="scientific">Bacillus pumilus (strain SAFR-032)</name>
    <dbReference type="NCBI Taxonomy" id="315750"/>
    <lineage>
        <taxon>Bacteria</taxon>
        <taxon>Bacillati</taxon>
        <taxon>Bacillota</taxon>
        <taxon>Bacilli</taxon>
        <taxon>Bacillales</taxon>
        <taxon>Bacillaceae</taxon>
        <taxon>Bacillus</taxon>
    </lineage>
</organism>
<sequence>MNIIEFEDKEQLGKEAAALIARTIASKPDAVLGLATGGTPLDTYQELIHLYQSQQLSFKQTKTVNLDEYAGLDPDHENSYMTYMKRHLFDHIDLPQDQYFLPNGASPDLEKECLRYDQLIQDIGGIDLQLLGIGQNGHIGFNEPGTPFNSMTHVVQLDENTRQANARYFSSIDEVPTHAITMGIASILSSKKILLLASGKSKAKVIQYLEQTEIHPDFPASALKLHEDVTILIDREAGSLR</sequence>
<reference key="1">
    <citation type="journal article" date="2007" name="PLoS ONE">
        <title>Paradoxical DNA repair and peroxide resistance gene conservation in Bacillus pumilus SAFR-032.</title>
        <authorList>
            <person name="Gioia J."/>
            <person name="Yerrapragada S."/>
            <person name="Qin X."/>
            <person name="Jiang H."/>
            <person name="Igboeli O.C."/>
            <person name="Muzny D."/>
            <person name="Dugan-Rocha S."/>
            <person name="Ding Y."/>
            <person name="Hawes A."/>
            <person name="Liu W."/>
            <person name="Perez L."/>
            <person name="Kovar C."/>
            <person name="Dinh H."/>
            <person name="Lee S."/>
            <person name="Nazareth L."/>
            <person name="Blyth P."/>
            <person name="Holder M."/>
            <person name="Buhay C."/>
            <person name="Tirumalai M.R."/>
            <person name="Liu Y."/>
            <person name="Dasgupta I."/>
            <person name="Bokhetache L."/>
            <person name="Fujita M."/>
            <person name="Karouia F."/>
            <person name="Eswara Moorthy P."/>
            <person name="Siefert J."/>
            <person name="Uzman A."/>
            <person name="Buzumbo P."/>
            <person name="Verma A."/>
            <person name="Zwiya H."/>
            <person name="McWilliams B.D."/>
            <person name="Olowu A."/>
            <person name="Clinkenbeard K.D."/>
            <person name="Newcombe D."/>
            <person name="Golebiewski L."/>
            <person name="Petrosino J.F."/>
            <person name="Nicholson W.L."/>
            <person name="Fox G.E."/>
            <person name="Venkateswaran K."/>
            <person name="Highlander S.K."/>
            <person name="Weinstock G.M."/>
        </authorList>
    </citation>
    <scope>NUCLEOTIDE SEQUENCE [LARGE SCALE GENOMIC DNA]</scope>
    <source>
        <strain>SAFR-032</strain>
    </source>
</reference>
<protein>
    <recommendedName>
        <fullName evidence="1">Glucosamine-6-phosphate deaminase</fullName>
        <ecNumber evidence="1">3.5.99.6</ecNumber>
    </recommendedName>
    <alternativeName>
        <fullName evidence="1">GlcN6P deaminase</fullName>
        <shortName evidence="1">GNPDA</shortName>
    </alternativeName>
    <alternativeName>
        <fullName evidence="1">Glucosamine-6-phosphate isomerase</fullName>
    </alternativeName>
</protein>
<feature type="chain" id="PRO_1000066960" description="Glucosamine-6-phosphate deaminase">
    <location>
        <begin position="1"/>
        <end position="241"/>
    </location>
</feature>
<feature type="active site" description="Proton acceptor; for enolization step" evidence="1">
    <location>
        <position position="67"/>
    </location>
</feature>
<feature type="active site" description="For ring-opening step" evidence="1">
    <location>
        <position position="136"/>
    </location>
</feature>
<feature type="active site" description="Proton acceptor; for ring-opening step" evidence="1">
    <location>
        <position position="138"/>
    </location>
</feature>
<feature type="active site" description="For ring-opening step" evidence="1">
    <location>
        <position position="143"/>
    </location>
</feature>
<proteinExistence type="inferred from homology"/>
<evidence type="ECO:0000255" key="1">
    <source>
        <dbReference type="HAMAP-Rule" id="MF_01241"/>
    </source>
</evidence>
<comment type="function">
    <text evidence="1">Catalyzes the reversible isomerization-deamination of glucosamine 6-phosphate (GlcN6P) to form fructose 6-phosphate (Fru6P) and ammonium ion.</text>
</comment>
<comment type="catalytic activity">
    <reaction evidence="1">
        <text>alpha-D-glucosamine 6-phosphate + H2O = beta-D-fructose 6-phosphate + NH4(+)</text>
        <dbReference type="Rhea" id="RHEA:12172"/>
        <dbReference type="ChEBI" id="CHEBI:15377"/>
        <dbReference type="ChEBI" id="CHEBI:28938"/>
        <dbReference type="ChEBI" id="CHEBI:57634"/>
        <dbReference type="ChEBI" id="CHEBI:75989"/>
        <dbReference type="EC" id="3.5.99.6"/>
    </reaction>
</comment>
<comment type="pathway">
    <text evidence="1">Amino-sugar metabolism; N-acetylneuraminate degradation; D-fructose 6-phosphate from N-acetylneuraminate: step 5/5.</text>
</comment>
<comment type="similarity">
    <text evidence="1">Belongs to the glucosamine/galactosamine-6-phosphate isomerase family. NagB subfamily.</text>
</comment>
<name>NAGB_BACP2</name>